<evidence type="ECO:0000255" key="1">
    <source>
        <dbReference type="HAMAP-Rule" id="MF_00005"/>
    </source>
</evidence>
<sequence>MKGEVKKVVLAYSGGLDTSIILRWLQDQYQCEVVTFTADLGQGEELEPARAKARLMGIKEENIFIDDLREEFVRDFVFPMFRANALYEGVYLLGTSIARPLISKRQIEIANMVGADAVSHGATGKGNDQVRFEMGYYALKPDIKVIAPWRLWDLTSRTKLLDFAEKHQIPIAKDKRGEAPYSTDANLLHISYEGKALEDPWVEPFEDMYTRSVAPENAPDKPTYIEIEFEKGDAVAIDGVRLSPAALLTKLNELGGANGIGRLDLVENRFVGMKSRGVYETPGGSVLIVAHRAMESLTLDRGESHLKDELMPRYAELIYNGFWFAPERIAIQTMIDKVSENVSGTVRLKLFKGVASVVGRKSPKSLYRMDYVTFEEDSVYDQRDAQGFIKLNALRMRLAKMARG</sequence>
<name>ASSY_PARM1</name>
<organism>
    <name type="scientific">Paramagnetospirillum magneticum (strain ATCC 700264 / AMB-1)</name>
    <name type="common">Magnetospirillum magneticum</name>
    <dbReference type="NCBI Taxonomy" id="342108"/>
    <lineage>
        <taxon>Bacteria</taxon>
        <taxon>Pseudomonadati</taxon>
        <taxon>Pseudomonadota</taxon>
        <taxon>Alphaproteobacteria</taxon>
        <taxon>Rhodospirillales</taxon>
        <taxon>Magnetospirillaceae</taxon>
        <taxon>Paramagnetospirillum</taxon>
    </lineage>
</organism>
<accession>Q2W896</accession>
<reference key="1">
    <citation type="journal article" date="2005" name="DNA Res.">
        <title>Complete genome sequence of the facultative anaerobic magnetotactic bacterium Magnetospirillum sp. strain AMB-1.</title>
        <authorList>
            <person name="Matsunaga T."/>
            <person name="Okamura Y."/>
            <person name="Fukuda Y."/>
            <person name="Wahyudi A.T."/>
            <person name="Murase Y."/>
            <person name="Takeyama H."/>
        </authorList>
    </citation>
    <scope>NUCLEOTIDE SEQUENCE [LARGE SCALE GENOMIC DNA]</scope>
    <source>
        <strain>ATCC 700264 / AMB-1</strain>
    </source>
</reference>
<feature type="chain" id="PRO_0000263936" description="Argininosuccinate synthase">
    <location>
        <begin position="1"/>
        <end position="404"/>
    </location>
</feature>
<feature type="binding site" evidence="1">
    <location>
        <begin position="11"/>
        <end position="19"/>
    </location>
    <ligand>
        <name>ATP</name>
        <dbReference type="ChEBI" id="CHEBI:30616"/>
    </ligand>
</feature>
<feature type="binding site" evidence="1">
    <location>
        <position position="38"/>
    </location>
    <ligand>
        <name>ATP</name>
        <dbReference type="ChEBI" id="CHEBI:30616"/>
    </ligand>
</feature>
<feature type="binding site" evidence="1">
    <location>
        <position position="91"/>
    </location>
    <ligand>
        <name>L-citrulline</name>
        <dbReference type="ChEBI" id="CHEBI:57743"/>
    </ligand>
</feature>
<feature type="binding site" evidence="1">
    <location>
        <position position="96"/>
    </location>
    <ligand>
        <name>L-citrulline</name>
        <dbReference type="ChEBI" id="CHEBI:57743"/>
    </ligand>
</feature>
<feature type="binding site" evidence="1">
    <location>
        <position position="121"/>
    </location>
    <ligand>
        <name>ATP</name>
        <dbReference type="ChEBI" id="CHEBI:30616"/>
    </ligand>
</feature>
<feature type="binding site" evidence="1">
    <location>
        <position position="123"/>
    </location>
    <ligand>
        <name>L-aspartate</name>
        <dbReference type="ChEBI" id="CHEBI:29991"/>
    </ligand>
</feature>
<feature type="binding site" evidence="1">
    <location>
        <position position="127"/>
    </location>
    <ligand>
        <name>L-aspartate</name>
        <dbReference type="ChEBI" id="CHEBI:29991"/>
    </ligand>
</feature>
<feature type="binding site" evidence="1">
    <location>
        <position position="127"/>
    </location>
    <ligand>
        <name>L-citrulline</name>
        <dbReference type="ChEBI" id="CHEBI:57743"/>
    </ligand>
</feature>
<feature type="binding site" evidence="1">
    <location>
        <position position="128"/>
    </location>
    <ligand>
        <name>L-aspartate</name>
        <dbReference type="ChEBI" id="CHEBI:29991"/>
    </ligand>
</feature>
<feature type="binding site" evidence="1">
    <location>
        <position position="131"/>
    </location>
    <ligand>
        <name>L-citrulline</name>
        <dbReference type="ChEBI" id="CHEBI:57743"/>
    </ligand>
</feature>
<feature type="binding site" evidence="1">
    <location>
        <position position="182"/>
    </location>
    <ligand>
        <name>L-citrulline</name>
        <dbReference type="ChEBI" id="CHEBI:57743"/>
    </ligand>
</feature>
<feature type="binding site" evidence="1">
    <location>
        <position position="191"/>
    </location>
    <ligand>
        <name>L-citrulline</name>
        <dbReference type="ChEBI" id="CHEBI:57743"/>
    </ligand>
</feature>
<feature type="binding site" evidence="1">
    <location>
        <position position="267"/>
    </location>
    <ligand>
        <name>L-citrulline</name>
        <dbReference type="ChEBI" id="CHEBI:57743"/>
    </ligand>
</feature>
<feature type="binding site" evidence="1">
    <location>
        <position position="279"/>
    </location>
    <ligand>
        <name>L-citrulline</name>
        <dbReference type="ChEBI" id="CHEBI:57743"/>
    </ligand>
</feature>
<dbReference type="EC" id="6.3.4.5" evidence="1"/>
<dbReference type="EMBL" id="AP007255">
    <property type="protein sequence ID" value="BAE49929.1"/>
    <property type="molecule type" value="Genomic_DNA"/>
</dbReference>
<dbReference type="RefSeq" id="WP_011383538.1">
    <property type="nucleotide sequence ID" value="NC_007626.1"/>
</dbReference>
<dbReference type="SMR" id="Q2W896"/>
<dbReference type="STRING" id="342108.amb1125"/>
<dbReference type="KEGG" id="mag:amb1125"/>
<dbReference type="HOGENOM" id="CLU_032784_4_2_5"/>
<dbReference type="OrthoDB" id="9801641at2"/>
<dbReference type="UniPathway" id="UPA00068">
    <property type="reaction ID" value="UER00113"/>
</dbReference>
<dbReference type="Proteomes" id="UP000007058">
    <property type="component" value="Chromosome"/>
</dbReference>
<dbReference type="GO" id="GO:0005737">
    <property type="term" value="C:cytoplasm"/>
    <property type="evidence" value="ECO:0007669"/>
    <property type="project" value="UniProtKB-SubCell"/>
</dbReference>
<dbReference type="GO" id="GO:0004055">
    <property type="term" value="F:argininosuccinate synthase activity"/>
    <property type="evidence" value="ECO:0007669"/>
    <property type="project" value="UniProtKB-UniRule"/>
</dbReference>
<dbReference type="GO" id="GO:0005524">
    <property type="term" value="F:ATP binding"/>
    <property type="evidence" value="ECO:0007669"/>
    <property type="project" value="UniProtKB-UniRule"/>
</dbReference>
<dbReference type="GO" id="GO:0000053">
    <property type="term" value="P:argininosuccinate metabolic process"/>
    <property type="evidence" value="ECO:0007669"/>
    <property type="project" value="TreeGrafter"/>
</dbReference>
<dbReference type="GO" id="GO:0006526">
    <property type="term" value="P:L-arginine biosynthetic process"/>
    <property type="evidence" value="ECO:0007669"/>
    <property type="project" value="UniProtKB-UniRule"/>
</dbReference>
<dbReference type="GO" id="GO:0000050">
    <property type="term" value="P:urea cycle"/>
    <property type="evidence" value="ECO:0007669"/>
    <property type="project" value="TreeGrafter"/>
</dbReference>
<dbReference type="CDD" id="cd01999">
    <property type="entry name" value="ASS"/>
    <property type="match status" value="1"/>
</dbReference>
<dbReference type="FunFam" id="3.40.50.620:FF:000019">
    <property type="entry name" value="Argininosuccinate synthase"/>
    <property type="match status" value="1"/>
</dbReference>
<dbReference type="FunFam" id="3.90.1260.10:FF:000007">
    <property type="entry name" value="Argininosuccinate synthase"/>
    <property type="match status" value="1"/>
</dbReference>
<dbReference type="Gene3D" id="3.90.1260.10">
    <property type="entry name" value="Argininosuccinate synthetase, chain A, domain 2"/>
    <property type="match status" value="1"/>
</dbReference>
<dbReference type="Gene3D" id="3.40.50.620">
    <property type="entry name" value="HUPs"/>
    <property type="match status" value="1"/>
</dbReference>
<dbReference type="Gene3D" id="1.20.5.470">
    <property type="entry name" value="Single helix bin"/>
    <property type="match status" value="1"/>
</dbReference>
<dbReference type="HAMAP" id="MF_00005">
    <property type="entry name" value="Arg_succ_synth_type1"/>
    <property type="match status" value="1"/>
</dbReference>
<dbReference type="InterPro" id="IPR048268">
    <property type="entry name" value="Arginosuc_syn_C"/>
</dbReference>
<dbReference type="InterPro" id="IPR048267">
    <property type="entry name" value="Arginosuc_syn_N"/>
</dbReference>
<dbReference type="InterPro" id="IPR001518">
    <property type="entry name" value="Arginosuc_synth"/>
</dbReference>
<dbReference type="InterPro" id="IPR018223">
    <property type="entry name" value="Arginosuc_synth_CS"/>
</dbReference>
<dbReference type="InterPro" id="IPR023434">
    <property type="entry name" value="Arginosuc_synth_type_1_subfam"/>
</dbReference>
<dbReference type="InterPro" id="IPR024074">
    <property type="entry name" value="AS_cat/multimer_dom_body"/>
</dbReference>
<dbReference type="InterPro" id="IPR014729">
    <property type="entry name" value="Rossmann-like_a/b/a_fold"/>
</dbReference>
<dbReference type="NCBIfam" id="TIGR00032">
    <property type="entry name" value="argG"/>
    <property type="match status" value="1"/>
</dbReference>
<dbReference type="NCBIfam" id="NF001770">
    <property type="entry name" value="PRK00509.1"/>
    <property type="match status" value="1"/>
</dbReference>
<dbReference type="PANTHER" id="PTHR11587">
    <property type="entry name" value="ARGININOSUCCINATE SYNTHASE"/>
    <property type="match status" value="1"/>
</dbReference>
<dbReference type="PANTHER" id="PTHR11587:SF2">
    <property type="entry name" value="ARGININOSUCCINATE SYNTHASE"/>
    <property type="match status" value="1"/>
</dbReference>
<dbReference type="Pfam" id="PF20979">
    <property type="entry name" value="Arginosuc_syn_C"/>
    <property type="match status" value="1"/>
</dbReference>
<dbReference type="Pfam" id="PF00764">
    <property type="entry name" value="Arginosuc_synth"/>
    <property type="match status" value="1"/>
</dbReference>
<dbReference type="SUPFAM" id="SSF52402">
    <property type="entry name" value="Adenine nucleotide alpha hydrolases-like"/>
    <property type="match status" value="1"/>
</dbReference>
<dbReference type="SUPFAM" id="SSF69864">
    <property type="entry name" value="Argininosuccinate synthetase, C-terminal domain"/>
    <property type="match status" value="1"/>
</dbReference>
<dbReference type="PROSITE" id="PS00564">
    <property type="entry name" value="ARGININOSUCCIN_SYN_1"/>
    <property type="match status" value="1"/>
</dbReference>
<dbReference type="PROSITE" id="PS00565">
    <property type="entry name" value="ARGININOSUCCIN_SYN_2"/>
    <property type="match status" value="1"/>
</dbReference>
<gene>
    <name evidence="1" type="primary">argG</name>
    <name type="ordered locus">amb1125</name>
</gene>
<keyword id="KW-0028">Amino-acid biosynthesis</keyword>
<keyword id="KW-0055">Arginine biosynthesis</keyword>
<keyword id="KW-0067">ATP-binding</keyword>
<keyword id="KW-0963">Cytoplasm</keyword>
<keyword id="KW-0436">Ligase</keyword>
<keyword id="KW-0547">Nucleotide-binding</keyword>
<proteinExistence type="inferred from homology"/>
<comment type="catalytic activity">
    <reaction evidence="1">
        <text>L-citrulline + L-aspartate + ATP = 2-(N(omega)-L-arginino)succinate + AMP + diphosphate + H(+)</text>
        <dbReference type="Rhea" id="RHEA:10932"/>
        <dbReference type="ChEBI" id="CHEBI:15378"/>
        <dbReference type="ChEBI" id="CHEBI:29991"/>
        <dbReference type="ChEBI" id="CHEBI:30616"/>
        <dbReference type="ChEBI" id="CHEBI:33019"/>
        <dbReference type="ChEBI" id="CHEBI:57472"/>
        <dbReference type="ChEBI" id="CHEBI:57743"/>
        <dbReference type="ChEBI" id="CHEBI:456215"/>
        <dbReference type="EC" id="6.3.4.5"/>
    </reaction>
</comment>
<comment type="pathway">
    <text evidence="1">Amino-acid biosynthesis; L-arginine biosynthesis; L-arginine from L-ornithine and carbamoyl phosphate: step 2/3.</text>
</comment>
<comment type="subunit">
    <text evidence="1">Homotetramer.</text>
</comment>
<comment type="subcellular location">
    <subcellularLocation>
        <location evidence="1">Cytoplasm</location>
    </subcellularLocation>
</comment>
<comment type="similarity">
    <text evidence="1">Belongs to the argininosuccinate synthase family. Type 1 subfamily.</text>
</comment>
<protein>
    <recommendedName>
        <fullName evidence="1">Argininosuccinate synthase</fullName>
        <ecNumber evidence="1">6.3.4.5</ecNumber>
    </recommendedName>
    <alternativeName>
        <fullName evidence="1">Citrulline--aspartate ligase</fullName>
    </alternativeName>
</protein>